<proteinExistence type="inferred from homology"/>
<feature type="signal peptide" evidence="2">
    <location>
        <begin position="1"/>
        <end position="19"/>
    </location>
</feature>
<feature type="chain" id="PRO_0000285553" description="Taste receptor type 1 member 2">
    <location>
        <begin position="20"/>
        <end position="839"/>
    </location>
</feature>
<feature type="topological domain" description="Extracellular" evidence="2">
    <location>
        <begin position="20"/>
        <end position="566"/>
    </location>
</feature>
<feature type="transmembrane region" description="Helical; Name=1" evidence="2">
    <location>
        <begin position="567"/>
        <end position="587"/>
    </location>
</feature>
<feature type="topological domain" description="Cytoplasmic" evidence="2">
    <location>
        <begin position="588"/>
        <end position="602"/>
    </location>
</feature>
<feature type="transmembrane region" description="Helical; Name=2" evidence="2">
    <location>
        <begin position="603"/>
        <end position="623"/>
    </location>
</feature>
<feature type="topological domain" description="Extracellular" evidence="2">
    <location>
        <begin position="624"/>
        <end position="635"/>
    </location>
</feature>
<feature type="transmembrane region" description="Helical; Name=3" evidence="2">
    <location>
        <begin position="636"/>
        <end position="656"/>
    </location>
</feature>
<feature type="topological domain" description="Cytoplasmic" evidence="2">
    <location>
        <begin position="657"/>
        <end position="681"/>
    </location>
</feature>
<feature type="transmembrane region" description="Helical; Name=4" evidence="2">
    <location>
        <begin position="682"/>
        <end position="702"/>
    </location>
</feature>
<feature type="topological domain" description="Extracellular" evidence="2">
    <location>
        <begin position="703"/>
        <end position="727"/>
    </location>
</feature>
<feature type="transmembrane region" description="Helical; Name=5" evidence="2">
    <location>
        <begin position="728"/>
        <end position="748"/>
    </location>
</feature>
<feature type="topological domain" description="Cytoplasmic" evidence="2">
    <location>
        <begin position="749"/>
        <end position="760"/>
    </location>
</feature>
<feature type="transmembrane region" description="Helical; Name=6" evidence="2">
    <location>
        <begin position="761"/>
        <end position="781"/>
    </location>
</feature>
<feature type="topological domain" description="Extracellular" evidence="2">
    <location>
        <begin position="782"/>
        <end position="784"/>
    </location>
</feature>
<feature type="transmembrane region" description="Helical; Name=7" evidence="2">
    <location>
        <begin position="785"/>
        <end position="805"/>
    </location>
</feature>
<feature type="topological domain" description="Cytoplasmic" evidence="2">
    <location>
        <begin position="806"/>
        <end position="839"/>
    </location>
</feature>
<feature type="glycosylation site" description="N-linked (GlcNAc...) asparagine" evidence="2">
    <location>
        <position position="84"/>
    </location>
</feature>
<feature type="glycosylation site" description="N-linked (GlcNAc...) asparagine" evidence="2">
    <location>
        <position position="248"/>
    </location>
</feature>
<feature type="glycosylation site" description="N-linked (GlcNAc...) asparagine" evidence="2">
    <location>
        <position position="292"/>
    </location>
</feature>
<feature type="glycosylation site" description="N-linked (GlcNAc...) asparagine" evidence="2">
    <location>
        <position position="312"/>
    </location>
</feature>
<feature type="glycosylation site" description="N-linked (GlcNAc...) asparagine" evidence="2">
    <location>
        <position position="368"/>
    </location>
</feature>
<feature type="glycosylation site" description="N-linked (GlcNAc...) asparagine" evidence="2">
    <location>
        <position position="407"/>
    </location>
</feature>
<feature type="glycosylation site" description="N-linked (GlcNAc...) asparagine" evidence="2">
    <location>
        <position position="428"/>
    </location>
</feature>
<feature type="glycosylation site" description="N-linked (GlcNAc...) asparagine" evidence="2">
    <location>
        <position position="487"/>
    </location>
</feature>
<feature type="glycosylation site" description="N-linked (GlcNAc...) asparagine" evidence="2">
    <location>
        <position position="527"/>
    </location>
</feature>
<evidence type="ECO:0000250" key="1"/>
<evidence type="ECO:0000255" key="2"/>
<evidence type="ECO:0000305" key="3"/>
<keyword id="KW-1003">Cell membrane</keyword>
<keyword id="KW-0297">G-protein coupled receptor</keyword>
<keyword id="KW-0325">Glycoprotein</keyword>
<keyword id="KW-0472">Membrane</keyword>
<keyword id="KW-0675">Receptor</keyword>
<keyword id="KW-1185">Reference proteome</keyword>
<keyword id="KW-0716">Sensory transduction</keyword>
<keyword id="KW-0732">Signal</keyword>
<keyword id="KW-0919">Taste</keyword>
<keyword id="KW-0807">Transducer</keyword>
<keyword id="KW-0812">Transmembrane</keyword>
<keyword id="KW-1133">Transmembrane helix</keyword>
<name>TS1R2_PANTR</name>
<organism>
    <name type="scientific">Pan troglodytes</name>
    <name type="common">Chimpanzee</name>
    <dbReference type="NCBI Taxonomy" id="9598"/>
    <lineage>
        <taxon>Eukaryota</taxon>
        <taxon>Metazoa</taxon>
        <taxon>Chordata</taxon>
        <taxon>Craniata</taxon>
        <taxon>Vertebrata</taxon>
        <taxon>Euteleostomi</taxon>
        <taxon>Mammalia</taxon>
        <taxon>Eutheria</taxon>
        <taxon>Euarchontoglires</taxon>
        <taxon>Primates</taxon>
        <taxon>Haplorrhini</taxon>
        <taxon>Catarrhini</taxon>
        <taxon>Hominidae</taxon>
        <taxon>Pan</taxon>
    </lineage>
</organism>
<dbReference type="EMBL" id="DQ386295">
    <property type="protein sequence ID" value="ABD37675.1"/>
    <property type="molecule type" value="Genomic_DNA"/>
</dbReference>
<dbReference type="SMR" id="A3QNZ8"/>
<dbReference type="FunCoup" id="A3QNZ8">
    <property type="interactions" value="138"/>
</dbReference>
<dbReference type="STRING" id="9598.ENSPTRP00000000453"/>
<dbReference type="GlyCosmos" id="A3QNZ8">
    <property type="glycosylation" value="9 sites, No reported glycans"/>
</dbReference>
<dbReference type="eggNOG" id="KOG1056">
    <property type="taxonomic scope" value="Eukaryota"/>
</dbReference>
<dbReference type="InParanoid" id="A3QNZ8"/>
<dbReference type="Proteomes" id="UP000002277">
    <property type="component" value="Unplaced"/>
</dbReference>
<dbReference type="GO" id="GO:0005886">
    <property type="term" value="C:plasma membrane"/>
    <property type="evidence" value="ECO:0000318"/>
    <property type="project" value="GO_Central"/>
</dbReference>
<dbReference type="GO" id="GO:1903767">
    <property type="term" value="C:sweet taste receptor complex"/>
    <property type="evidence" value="ECO:0000318"/>
    <property type="project" value="GO_Central"/>
</dbReference>
<dbReference type="GO" id="GO:0004930">
    <property type="term" value="F:G protein-coupled receptor activity"/>
    <property type="evidence" value="ECO:0000318"/>
    <property type="project" value="GO_Central"/>
</dbReference>
<dbReference type="GO" id="GO:0001582">
    <property type="term" value="P:detection of chemical stimulus involved in sensory perception of sweet taste"/>
    <property type="evidence" value="ECO:0007669"/>
    <property type="project" value="GOC"/>
</dbReference>
<dbReference type="GO" id="GO:0050916">
    <property type="term" value="P:sensory perception of sweet taste"/>
    <property type="evidence" value="ECO:0000318"/>
    <property type="project" value="GO_Central"/>
</dbReference>
<dbReference type="CDD" id="cd15288">
    <property type="entry name" value="7tmC_TAS1R2"/>
    <property type="match status" value="1"/>
</dbReference>
<dbReference type="CDD" id="cd06363">
    <property type="entry name" value="PBP1_taste_receptor"/>
    <property type="match status" value="1"/>
</dbReference>
<dbReference type="FunFam" id="3.40.50.2300:FF:000016">
    <property type="entry name" value="Taste 1 receptor member 2"/>
    <property type="match status" value="1"/>
</dbReference>
<dbReference type="FunFam" id="2.10.50.30:FF:000004">
    <property type="entry name" value="Taste receptor type 1 member 3-like protein"/>
    <property type="match status" value="1"/>
</dbReference>
<dbReference type="Gene3D" id="3.40.50.2300">
    <property type="match status" value="2"/>
</dbReference>
<dbReference type="Gene3D" id="2.10.50.30">
    <property type="entry name" value="GPCR, family 3, nine cysteines domain"/>
    <property type="match status" value="1"/>
</dbReference>
<dbReference type="InterPro" id="IPR001828">
    <property type="entry name" value="ANF_lig-bd_rcpt"/>
</dbReference>
<dbReference type="InterPro" id="IPR000337">
    <property type="entry name" value="GPCR_3"/>
</dbReference>
<dbReference type="InterPro" id="IPR011500">
    <property type="entry name" value="GPCR_3_9-Cys_dom"/>
</dbReference>
<dbReference type="InterPro" id="IPR038550">
    <property type="entry name" value="GPCR_3_9-Cys_sf"/>
</dbReference>
<dbReference type="InterPro" id="IPR017978">
    <property type="entry name" value="GPCR_3_C"/>
</dbReference>
<dbReference type="InterPro" id="IPR000068">
    <property type="entry name" value="GPCR_3_Ca_sens_rcpt-rel"/>
</dbReference>
<dbReference type="InterPro" id="IPR017979">
    <property type="entry name" value="GPCR_3_CS"/>
</dbReference>
<dbReference type="InterPro" id="IPR028082">
    <property type="entry name" value="Peripla_BP_I"/>
</dbReference>
<dbReference type="PANTHER" id="PTHR24061">
    <property type="entry name" value="CALCIUM-SENSING RECEPTOR-RELATED"/>
    <property type="match status" value="1"/>
</dbReference>
<dbReference type="PANTHER" id="PTHR24061:SF517">
    <property type="entry name" value="TASTE RECEPTOR TYPE 1 MEMBER 2"/>
    <property type="match status" value="1"/>
</dbReference>
<dbReference type="Pfam" id="PF00003">
    <property type="entry name" value="7tm_3"/>
    <property type="match status" value="1"/>
</dbReference>
<dbReference type="Pfam" id="PF01094">
    <property type="entry name" value="ANF_receptor"/>
    <property type="match status" value="1"/>
</dbReference>
<dbReference type="Pfam" id="PF07562">
    <property type="entry name" value="NCD3G"/>
    <property type="match status" value="1"/>
</dbReference>
<dbReference type="PRINTS" id="PR00248">
    <property type="entry name" value="GPCRMGR"/>
</dbReference>
<dbReference type="SUPFAM" id="SSF53822">
    <property type="entry name" value="Periplasmic binding protein-like I"/>
    <property type="match status" value="1"/>
</dbReference>
<dbReference type="PROSITE" id="PS00980">
    <property type="entry name" value="G_PROTEIN_RECEP_F3_2"/>
    <property type="match status" value="1"/>
</dbReference>
<dbReference type="PROSITE" id="PS50259">
    <property type="entry name" value="G_PROTEIN_RECEP_F3_4"/>
    <property type="match status" value="1"/>
</dbReference>
<comment type="function">
    <text evidence="1">Putative taste receptor. TAS1R2/TAS1R3 recognizes diverse natural and synthetic sweeteners (By similarity).</text>
</comment>
<comment type="subunit">
    <text evidence="1">Forms heterodimers with TAS1R3.</text>
</comment>
<comment type="subcellular location">
    <subcellularLocation>
        <location evidence="1">Cell membrane</location>
        <topology evidence="1">Multi-pass membrane protein</topology>
    </subcellularLocation>
</comment>
<comment type="similarity">
    <text evidence="3">Belongs to the G-protein coupled receptor 3 family. TAS1R subfamily.</text>
</comment>
<protein>
    <recommendedName>
        <fullName>Taste receptor type 1 member 2</fullName>
    </recommendedName>
    <alternativeName>
        <fullName>Sweet taste receptor T1R2</fullName>
    </alternativeName>
</protein>
<gene>
    <name type="primary">TAS1R2</name>
</gene>
<accession>A3QNZ8</accession>
<sequence>MGPRAKTICSLFFLLWVLAEPAENSDFYLPGDYLLGGLFSLHANMKGIVHLNFLQVPMCKEYEVKVIGYNLMQAMRFAVEEINNDSSLLPGVLLGYEIVDVCYISNNVQPVLYFLAHEDNLLPIQEDYSNYISRVVAVIGPDNSESVMTVANFLSLFLLPQITYSAIGDELRDKVRFPALLRTTPSADHHVEAMVQLMLHFRWNWIIVLVSSDTYGRDNGQLLGERLARRDICIAFQETLPALQPNQNMTSEERQRLVTIVDKLQQSTARVVVVFSPDLSLYDFFNEVLRQNFTGAVWIASESWAIDPVLHNLTELRHLGTFLGITIQSVPIPGFSEFREWGPQAGPPPLSRTSQSYTCNQECDNCLNATLSFNTILRLSGERVVYSVYSAVYAVAHALHSLLGCDNSTCTKRVVYPWQLLEEIWKVNFTLLDHQIFFDPQGDVALHLEIVQWQWDRSQNPFQSVASYYPLQRQLKNIQDISWHTINNTIPVSMCSKRCQSGQKKKPVGIHVCCFECIDCLPGTFLNHTEDEYECQACPNNEWSYQSETSCFKRQLVFLEWHEAPTIAVALLAALGFLSTLAILVIFWRHFQTPIVRSAGGPMCFLMLTLLLVAYMVVPVYVGPPKVSTCLCRQALFPLCFTICISCIAVRSFQIVCAFKMASRFPRAYSYWVRYQGPYVSMAFITVLKMVIVVIGMLATGLSPTTRTDPDDPKITIVSCNPNYRNSLLFNTSLDLLLSVVGFSFAYMGKELPTNYNEAKFITLSMTFYFTSSVSLCTFMSAYSGVLVTIVDLLVTVLNLLAISLGYFGPKCYMILFYPERNTSAYFNSMIQGYTMRRD</sequence>
<reference key="1">
    <citation type="submission" date="2006-02" db="EMBL/GenBank/DDBJ databases">
        <title>Sweet receptor gene variation and aspartame blindness in both primates and non-primates.</title>
        <authorList>
            <person name="Li X."/>
            <person name="Wong E.W."/>
            <person name="Li W."/>
            <person name="Lim R."/>
            <person name="Mascioli K.J."/>
            <person name="Maehashi K."/>
            <person name="Bachmanov A.A."/>
            <person name="Tordoff M.G."/>
            <person name="Beauchamp G.K."/>
            <person name="Reed D.R."/>
        </authorList>
    </citation>
    <scope>NUCLEOTIDE SEQUENCE [GENOMIC DNA]</scope>
</reference>